<protein>
    <recommendedName>
        <fullName evidence="1">Aspartate--tRNA ligase</fullName>
        <ecNumber evidence="1">6.1.1.12</ecNumber>
    </recommendedName>
    <alternativeName>
        <fullName evidence="1">Aspartyl-tRNA synthetase</fullName>
        <shortName evidence="1">AspRS</shortName>
    </alternativeName>
</protein>
<name>SYD_PASMU</name>
<sequence length="588" mass="66433">MMRTHYCGALNRDNIGQEVTLSGWVHRRRDLGGLIFIDMRDREGIVQVCFDPVYQEALTTAASLRNEFCIQIKGEVIARPDNQINKNMATGEVEVLAKSLSIYNSAEPLPLDFNQNNTEEQRLKYRYLDLRRPEMAQRLKTRAKITSFVRRFMDEHGFLDIETPMLTKATPEGARDYLVPSRVHKGKFYALPQSPQLFKQLLMMSGFDRYYQIVKCFRDEDLRADRQPEFTQIDVETSFLTAPEVREIMEKMVHGLWRETLGVDLGKFPVMTFAEAMRRFGSDKPDLRNPLEMVDVADLLKEVEFKVFNGPANDPNGRIAVIRVPNGTDITRKQIDEYTQFVGIYGAKGLAWLKVNDLAAGMDGVQSPIAKFLSEAVLKALLERVQAQNGDILFFGADNYKVTTDAMGALRLKLGRDLGLTKLEEWQPLWVIDFPMFERDDEGDLAAMHHPFTSPKDFSPEQLEADPTSAVANAYDMVINGYEVGGGSVRIFDPKMQQTVFRILGINEAEQREKFGFLLDALKFGTPPHAGLAFGLDRLTMLLTGTDNIRDVIAFPKTTAAACLMTEAPSFANPQALNELSVQVIKSE</sequence>
<gene>
    <name evidence="1" type="primary">aspS</name>
    <name type="ordered locus">PM0983</name>
</gene>
<keyword id="KW-0030">Aminoacyl-tRNA synthetase</keyword>
<keyword id="KW-0067">ATP-binding</keyword>
<keyword id="KW-0963">Cytoplasm</keyword>
<keyword id="KW-0436">Ligase</keyword>
<keyword id="KW-0547">Nucleotide-binding</keyword>
<keyword id="KW-0648">Protein biosynthesis</keyword>
<keyword id="KW-1185">Reference proteome</keyword>
<dbReference type="EC" id="6.1.1.12" evidence="1"/>
<dbReference type="EMBL" id="AE004439">
    <property type="protein sequence ID" value="AAK03067.1"/>
    <property type="molecule type" value="Genomic_DNA"/>
</dbReference>
<dbReference type="RefSeq" id="WP_010906950.1">
    <property type="nucleotide sequence ID" value="NC_002663.1"/>
</dbReference>
<dbReference type="SMR" id="P57895"/>
<dbReference type="STRING" id="272843.PM0983"/>
<dbReference type="EnsemblBacteria" id="AAK03067">
    <property type="protein sequence ID" value="AAK03067"/>
    <property type="gene ID" value="PM0983"/>
</dbReference>
<dbReference type="KEGG" id="pmu:PM0983"/>
<dbReference type="PATRIC" id="fig|272843.6.peg.995"/>
<dbReference type="HOGENOM" id="CLU_014330_3_2_6"/>
<dbReference type="OrthoDB" id="9802326at2"/>
<dbReference type="Proteomes" id="UP000000809">
    <property type="component" value="Chromosome"/>
</dbReference>
<dbReference type="GO" id="GO:0005737">
    <property type="term" value="C:cytoplasm"/>
    <property type="evidence" value="ECO:0007669"/>
    <property type="project" value="UniProtKB-SubCell"/>
</dbReference>
<dbReference type="GO" id="GO:0004815">
    <property type="term" value="F:aspartate-tRNA ligase activity"/>
    <property type="evidence" value="ECO:0007669"/>
    <property type="project" value="UniProtKB-UniRule"/>
</dbReference>
<dbReference type="GO" id="GO:0005524">
    <property type="term" value="F:ATP binding"/>
    <property type="evidence" value="ECO:0007669"/>
    <property type="project" value="UniProtKB-UniRule"/>
</dbReference>
<dbReference type="GO" id="GO:0003676">
    <property type="term" value="F:nucleic acid binding"/>
    <property type="evidence" value="ECO:0007669"/>
    <property type="project" value="InterPro"/>
</dbReference>
<dbReference type="GO" id="GO:0006422">
    <property type="term" value="P:aspartyl-tRNA aminoacylation"/>
    <property type="evidence" value="ECO:0007669"/>
    <property type="project" value="UniProtKB-UniRule"/>
</dbReference>
<dbReference type="CDD" id="cd00777">
    <property type="entry name" value="AspRS_core"/>
    <property type="match status" value="1"/>
</dbReference>
<dbReference type="CDD" id="cd04317">
    <property type="entry name" value="EcAspRS_like_N"/>
    <property type="match status" value="1"/>
</dbReference>
<dbReference type="FunFam" id="2.40.50.140:FF:000080">
    <property type="entry name" value="Aspartate--tRNA ligase"/>
    <property type="match status" value="1"/>
</dbReference>
<dbReference type="Gene3D" id="3.30.930.10">
    <property type="entry name" value="Bira Bifunctional Protein, Domain 2"/>
    <property type="match status" value="1"/>
</dbReference>
<dbReference type="Gene3D" id="3.30.1360.30">
    <property type="entry name" value="GAD-like domain"/>
    <property type="match status" value="1"/>
</dbReference>
<dbReference type="Gene3D" id="2.40.50.140">
    <property type="entry name" value="Nucleic acid-binding proteins"/>
    <property type="match status" value="1"/>
</dbReference>
<dbReference type="HAMAP" id="MF_00044">
    <property type="entry name" value="Asp_tRNA_synth_type1"/>
    <property type="match status" value="1"/>
</dbReference>
<dbReference type="InterPro" id="IPR004364">
    <property type="entry name" value="Aa-tRNA-synt_II"/>
</dbReference>
<dbReference type="InterPro" id="IPR006195">
    <property type="entry name" value="aa-tRNA-synth_II"/>
</dbReference>
<dbReference type="InterPro" id="IPR045864">
    <property type="entry name" value="aa-tRNA-synth_II/BPL/LPL"/>
</dbReference>
<dbReference type="InterPro" id="IPR004524">
    <property type="entry name" value="Asp-tRNA-ligase_1"/>
</dbReference>
<dbReference type="InterPro" id="IPR047089">
    <property type="entry name" value="Asp-tRNA-ligase_1_N"/>
</dbReference>
<dbReference type="InterPro" id="IPR002312">
    <property type="entry name" value="Asp/Asn-tRNA-synth_IIb"/>
</dbReference>
<dbReference type="InterPro" id="IPR047090">
    <property type="entry name" value="AspRS_core"/>
</dbReference>
<dbReference type="InterPro" id="IPR004115">
    <property type="entry name" value="GAD-like_sf"/>
</dbReference>
<dbReference type="InterPro" id="IPR029351">
    <property type="entry name" value="GAD_dom"/>
</dbReference>
<dbReference type="InterPro" id="IPR012340">
    <property type="entry name" value="NA-bd_OB-fold"/>
</dbReference>
<dbReference type="InterPro" id="IPR004365">
    <property type="entry name" value="NA-bd_OB_tRNA"/>
</dbReference>
<dbReference type="NCBIfam" id="TIGR00459">
    <property type="entry name" value="aspS_bact"/>
    <property type="match status" value="1"/>
</dbReference>
<dbReference type="NCBIfam" id="NF001750">
    <property type="entry name" value="PRK00476.1"/>
    <property type="match status" value="1"/>
</dbReference>
<dbReference type="PANTHER" id="PTHR22594:SF5">
    <property type="entry name" value="ASPARTATE--TRNA LIGASE, MITOCHONDRIAL"/>
    <property type="match status" value="1"/>
</dbReference>
<dbReference type="PANTHER" id="PTHR22594">
    <property type="entry name" value="ASPARTYL/LYSYL-TRNA SYNTHETASE"/>
    <property type="match status" value="1"/>
</dbReference>
<dbReference type="Pfam" id="PF02938">
    <property type="entry name" value="GAD"/>
    <property type="match status" value="1"/>
</dbReference>
<dbReference type="Pfam" id="PF00152">
    <property type="entry name" value="tRNA-synt_2"/>
    <property type="match status" value="1"/>
</dbReference>
<dbReference type="Pfam" id="PF01336">
    <property type="entry name" value="tRNA_anti-codon"/>
    <property type="match status" value="1"/>
</dbReference>
<dbReference type="PRINTS" id="PR01042">
    <property type="entry name" value="TRNASYNTHASP"/>
</dbReference>
<dbReference type="SUPFAM" id="SSF55681">
    <property type="entry name" value="Class II aaRS and biotin synthetases"/>
    <property type="match status" value="1"/>
</dbReference>
<dbReference type="SUPFAM" id="SSF55261">
    <property type="entry name" value="GAD domain-like"/>
    <property type="match status" value="1"/>
</dbReference>
<dbReference type="SUPFAM" id="SSF50249">
    <property type="entry name" value="Nucleic acid-binding proteins"/>
    <property type="match status" value="1"/>
</dbReference>
<dbReference type="PROSITE" id="PS50862">
    <property type="entry name" value="AA_TRNA_LIGASE_II"/>
    <property type="match status" value="1"/>
</dbReference>
<proteinExistence type="inferred from homology"/>
<feature type="chain" id="PRO_0000110916" description="Aspartate--tRNA ligase">
    <location>
        <begin position="1"/>
        <end position="588"/>
    </location>
</feature>
<feature type="region of interest" description="Aspartate" evidence="1">
    <location>
        <begin position="196"/>
        <end position="199"/>
    </location>
</feature>
<feature type="binding site" evidence="1">
    <location>
        <position position="172"/>
    </location>
    <ligand>
        <name>L-aspartate</name>
        <dbReference type="ChEBI" id="CHEBI:29991"/>
    </ligand>
</feature>
<feature type="binding site" evidence="1">
    <location>
        <begin position="218"/>
        <end position="220"/>
    </location>
    <ligand>
        <name>ATP</name>
        <dbReference type="ChEBI" id="CHEBI:30616"/>
    </ligand>
</feature>
<feature type="binding site" evidence="1">
    <location>
        <position position="218"/>
    </location>
    <ligand>
        <name>L-aspartate</name>
        <dbReference type="ChEBI" id="CHEBI:29991"/>
    </ligand>
</feature>
<feature type="binding site" evidence="1">
    <location>
        <position position="227"/>
    </location>
    <ligand>
        <name>ATP</name>
        <dbReference type="ChEBI" id="CHEBI:30616"/>
    </ligand>
</feature>
<feature type="binding site" evidence="1">
    <location>
        <position position="449"/>
    </location>
    <ligand>
        <name>L-aspartate</name>
        <dbReference type="ChEBI" id="CHEBI:29991"/>
    </ligand>
</feature>
<feature type="binding site" evidence="1">
    <location>
        <position position="483"/>
    </location>
    <ligand>
        <name>ATP</name>
        <dbReference type="ChEBI" id="CHEBI:30616"/>
    </ligand>
</feature>
<feature type="binding site" evidence="1">
    <location>
        <position position="490"/>
    </location>
    <ligand>
        <name>L-aspartate</name>
        <dbReference type="ChEBI" id="CHEBI:29991"/>
    </ligand>
</feature>
<feature type="binding site" evidence="1">
    <location>
        <begin position="535"/>
        <end position="538"/>
    </location>
    <ligand>
        <name>ATP</name>
        <dbReference type="ChEBI" id="CHEBI:30616"/>
    </ligand>
</feature>
<accession>P57895</accession>
<comment type="function">
    <text evidence="1">Catalyzes the attachment of L-aspartate to tRNA(Asp) in a two-step reaction: L-aspartate is first activated by ATP to form Asp-AMP and then transferred to the acceptor end of tRNA(Asp).</text>
</comment>
<comment type="catalytic activity">
    <reaction evidence="1">
        <text>tRNA(Asp) + L-aspartate + ATP = L-aspartyl-tRNA(Asp) + AMP + diphosphate</text>
        <dbReference type="Rhea" id="RHEA:19649"/>
        <dbReference type="Rhea" id="RHEA-COMP:9660"/>
        <dbReference type="Rhea" id="RHEA-COMP:9678"/>
        <dbReference type="ChEBI" id="CHEBI:29991"/>
        <dbReference type="ChEBI" id="CHEBI:30616"/>
        <dbReference type="ChEBI" id="CHEBI:33019"/>
        <dbReference type="ChEBI" id="CHEBI:78442"/>
        <dbReference type="ChEBI" id="CHEBI:78516"/>
        <dbReference type="ChEBI" id="CHEBI:456215"/>
        <dbReference type="EC" id="6.1.1.12"/>
    </reaction>
</comment>
<comment type="subunit">
    <text evidence="1">Homodimer.</text>
</comment>
<comment type="subcellular location">
    <subcellularLocation>
        <location evidence="1">Cytoplasm</location>
    </subcellularLocation>
</comment>
<comment type="similarity">
    <text evidence="1">Belongs to the class-II aminoacyl-tRNA synthetase family. Type 1 subfamily.</text>
</comment>
<organism>
    <name type="scientific">Pasteurella multocida (strain Pm70)</name>
    <dbReference type="NCBI Taxonomy" id="272843"/>
    <lineage>
        <taxon>Bacteria</taxon>
        <taxon>Pseudomonadati</taxon>
        <taxon>Pseudomonadota</taxon>
        <taxon>Gammaproteobacteria</taxon>
        <taxon>Pasteurellales</taxon>
        <taxon>Pasteurellaceae</taxon>
        <taxon>Pasteurella</taxon>
    </lineage>
</organism>
<reference key="1">
    <citation type="journal article" date="2001" name="Proc. Natl. Acad. Sci. U.S.A.">
        <title>Complete genomic sequence of Pasteurella multocida Pm70.</title>
        <authorList>
            <person name="May B.J."/>
            <person name="Zhang Q."/>
            <person name="Li L.L."/>
            <person name="Paustian M.L."/>
            <person name="Whittam T.S."/>
            <person name="Kapur V."/>
        </authorList>
    </citation>
    <scope>NUCLEOTIDE SEQUENCE [LARGE SCALE GENOMIC DNA]</scope>
    <source>
        <strain>Pm70</strain>
    </source>
</reference>
<evidence type="ECO:0000255" key="1">
    <source>
        <dbReference type="HAMAP-Rule" id="MF_00044"/>
    </source>
</evidence>